<name>PEZA_STRPN</name>
<proteinExistence type="evidence at protein level"/>
<accession>Q97QZ2</accession>
<feature type="chain" id="PRO_0000410966" description="Antitoxin PezA">
    <location>
        <begin position="1"/>
        <end position="158"/>
    </location>
</feature>
<feature type="domain" description="HTH cro/C1-type" evidence="1">
    <location>
        <begin position="6"/>
        <end position="60"/>
    </location>
</feature>
<feature type="DNA-binding region" description="H-T-H motif" evidence="1">
    <location>
        <begin position="17"/>
        <end position="36"/>
    </location>
</feature>
<feature type="helix" evidence="5">
    <location>
        <begin position="69"/>
        <end position="98"/>
    </location>
</feature>
<feature type="turn" evidence="5">
    <location>
        <begin position="99"/>
        <end position="101"/>
    </location>
</feature>
<feature type="helix" evidence="5">
    <location>
        <begin position="110"/>
        <end position="122"/>
    </location>
</feature>
<feature type="turn" evidence="5">
    <location>
        <begin position="123"/>
        <end position="125"/>
    </location>
</feature>
<feature type="helix" evidence="5">
    <location>
        <begin position="126"/>
        <end position="128"/>
    </location>
</feature>
<feature type="helix" evidence="5">
    <location>
        <begin position="132"/>
        <end position="154"/>
    </location>
</feature>
<keyword id="KW-0002">3D-structure</keyword>
<keyword id="KW-0238">DNA-binding</keyword>
<keyword id="KW-1185">Reference proteome</keyword>
<keyword id="KW-0678">Repressor</keyword>
<keyword id="KW-1277">Toxin-antitoxin system</keyword>
<keyword id="KW-0804">Transcription</keyword>
<keyword id="KW-0805">Transcription regulation</keyword>
<reference key="1">
    <citation type="journal article" date="2001" name="Science">
        <title>Complete genome sequence of a virulent isolate of Streptococcus pneumoniae.</title>
        <authorList>
            <person name="Tettelin H."/>
            <person name="Nelson K.E."/>
            <person name="Paulsen I.T."/>
            <person name="Eisen J.A."/>
            <person name="Read T.D."/>
            <person name="Peterson S.N."/>
            <person name="Heidelberg J.F."/>
            <person name="DeBoy R.T."/>
            <person name="Haft D.H."/>
            <person name="Dodson R.J."/>
            <person name="Durkin A.S."/>
            <person name="Gwinn M.L."/>
            <person name="Kolonay J.F."/>
            <person name="Nelson W.C."/>
            <person name="Peterson J.D."/>
            <person name="Umayam L.A."/>
            <person name="White O."/>
            <person name="Salzberg S.L."/>
            <person name="Lewis M.R."/>
            <person name="Radune D."/>
            <person name="Holtzapple E.K."/>
            <person name="Khouri H.M."/>
            <person name="Wolf A.M."/>
            <person name="Utterback T.R."/>
            <person name="Hansen C.L."/>
            <person name="McDonald L.A."/>
            <person name="Feldblyum T.V."/>
            <person name="Angiuoli S.V."/>
            <person name="Dickinson T."/>
            <person name="Hickey E.K."/>
            <person name="Holt I.E."/>
            <person name="Loftus B.J."/>
            <person name="Yang F."/>
            <person name="Smith H.O."/>
            <person name="Venter J.C."/>
            <person name="Dougherty B.A."/>
            <person name="Morrison D.A."/>
            <person name="Hollingshead S.K."/>
            <person name="Fraser C.M."/>
        </authorList>
    </citation>
    <scope>NUCLEOTIDE SEQUENCE [LARGE SCALE GENOMIC DNA]</scope>
    <source>
        <strain>ATCC BAA-334 / TIGR4</strain>
    </source>
</reference>
<reference key="2">
    <citation type="journal article" date="2004" name="Infect. Immun.">
        <title>A locus contained within a variable region of pneumococcal pathogenicity island 1 contributes to virulence in mice.</title>
        <authorList>
            <person name="Brown J.S."/>
            <person name="Gilliland S.M."/>
            <person name="Spratt B.G."/>
            <person name="Holden D.W."/>
        </authorList>
    </citation>
    <scope>OPERON STRUCTURE</scope>
    <source>
        <strain>0100993 / NCIMB 40794 / Serotype 3</strain>
    </source>
</reference>
<reference key="3">
    <citation type="journal article" date="2010" name="J. Biol. Chem.">
        <title>Assembly dynamics and stability of the pneumococcal epsilon zeta antitoxin toxin (PezAT) system from Streptococcus pneumoniae.</title>
        <authorList>
            <person name="Mutschler H."/>
            <person name="Reinstein J."/>
            <person name="Meinhart A."/>
        </authorList>
    </citation>
    <scope>SUBUNIT</scope>
    <scope>COMPLEX STABILITY</scope>
    <source>
        <strain>ATCC BAA-334 / TIGR4</strain>
    </source>
</reference>
<reference key="4">
    <citation type="journal article" date="2011" name="PLoS Biol.">
        <title>A novel mechanism of programmed cell death in bacteria by toxin-antitoxin systems corrupts peptidoglycan synthesis.</title>
        <authorList>
            <person name="Mutschler H."/>
            <person name="Gebhardt M."/>
            <person name="Shoeman R.L."/>
            <person name="Meinhart A."/>
        </authorList>
    </citation>
    <scope>FUNCTION AS AN ANTITOXIN</scope>
    <scope>EXPRESSION IN E.COLI</scope>
    <source>
        <strain>ATCC BAA-334 / TIGR4</strain>
    </source>
</reference>
<reference key="5">
    <citation type="journal article" date="2007" name="J. Biol. Chem.">
        <title>Molecular and structural characterization of the PezAT chromosomal toxin-antitoxin system of the human pathogen Streptococcus pneumoniae.</title>
        <authorList>
            <person name="Khoo S.K."/>
            <person name="Loll B."/>
            <person name="Chan W.T."/>
            <person name="Shoeman R.L."/>
            <person name="Ngoo L."/>
            <person name="Yeo C.C."/>
            <person name="Meinhart A."/>
        </authorList>
    </citation>
    <scope>X-RAY CRYSTALLOGRAPHY (3.20 ANGSTROMS)</scope>
    <scope>EXPRESSION IN E.COLI</scope>
    <scope>FUNCTION AS AN ANTITOXIN</scope>
    <scope>FUNCTION AS A TRANSCRIPTION REPRESSOR</scope>
    <scope>SUBUNIT</scope>
    <scope>DNA-BINDING</scope>
    <scope>OPERON STRUCTURE</scope>
    <source>
        <strain>ATCC BAA-334 / TIGR4</strain>
    </source>
</reference>
<organism>
    <name type="scientific">Streptococcus pneumoniae serotype 4 (strain ATCC BAA-334 / TIGR4)</name>
    <dbReference type="NCBI Taxonomy" id="170187"/>
    <lineage>
        <taxon>Bacteria</taxon>
        <taxon>Bacillati</taxon>
        <taxon>Bacillota</taxon>
        <taxon>Bacilli</taxon>
        <taxon>Lactobacillales</taxon>
        <taxon>Streptococcaceae</taxon>
        <taxon>Streptococcus</taxon>
    </lineage>
</organism>
<sequence length="158" mass="18248">MIGKNIKSLRKTHDLTQLEFARIVGISRNSLSRYENGTSSVSTELIDIICQKFNVSYVDIVGEDKMLNPVEDYELTLKIEIVKERGANLLSRLYRYQDSQGISIDDESNPWILMSDDLSDLIHTNIYLVETFDEIERYSGYLDGIERMLEISEKRMVA</sequence>
<protein>
    <recommendedName>
        <fullName>Antitoxin PezA</fullName>
    </recommendedName>
</protein>
<gene>
    <name type="primary">pezA</name>
    <name type="ordered locus">SP_1050</name>
</gene>
<evidence type="ECO:0000255" key="1">
    <source>
        <dbReference type="PROSITE-ProRule" id="PRU00257"/>
    </source>
</evidence>
<evidence type="ECO:0000269" key="2">
    <source>
    </source>
</evidence>
<evidence type="ECO:0000269" key="3">
    <source>
    </source>
</evidence>
<evidence type="ECO:0000269" key="4">
    <source>
    </source>
</evidence>
<evidence type="ECO:0007829" key="5">
    <source>
        <dbReference type="PDB" id="2P5T"/>
    </source>
</evidence>
<dbReference type="EMBL" id="AE005672">
    <property type="protein sequence ID" value="AAK75164.1"/>
    <property type="molecule type" value="Genomic_DNA"/>
</dbReference>
<dbReference type="PIR" id="C95121">
    <property type="entry name" value="C95121"/>
</dbReference>
<dbReference type="RefSeq" id="WP_000579608.1">
    <property type="nucleotide sequence ID" value="NZ_CP155539.1"/>
</dbReference>
<dbReference type="PDB" id="2P5T">
    <property type="method" value="X-ray"/>
    <property type="resolution" value="3.20 A"/>
    <property type="chains" value="A/C/E/G=1-158"/>
</dbReference>
<dbReference type="PDBsum" id="2P5T"/>
<dbReference type="SMR" id="Q97QZ2"/>
<dbReference type="DIP" id="DIP-58970N"/>
<dbReference type="IntAct" id="Q97QZ2">
    <property type="interactions" value="2"/>
</dbReference>
<dbReference type="PaxDb" id="170187-SP_1050"/>
<dbReference type="EnsemblBacteria" id="AAK75164">
    <property type="protein sequence ID" value="AAK75164"/>
    <property type="gene ID" value="SP_1050"/>
</dbReference>
<dbReference type="KEGG" id="spn:SP_1050"/>
<dbReference type="eggNOG" id="COG1396">
    <property type="taxonomic scope" value="Bacteria"/>
</dbReference>
<dbReference type="PhylomeDB" id="Q97QZ2"/>
<dbReference type="BioCyc" id="SPNE170187:G1FZB-1079-MONOMER"/>
<dbReference type="EvolutionaryTrace" id="Q97QZ2"/>
<dbReference type="Proteomes" id="UP000000585">
    <property type="component" value="Chromosome"/>
</dbReference>
<dbReference type="GO" id="GO:0003677">
    <property type="term" value="F:DNA binding"/>
    <property type="evidence" value="ECO:0007669"/>
    <property type="project" value="UniProtKB-KW"/>
</dbReference>
<dbReference type="GO" id="GO:0015643">
    <property type="term" value="F:toxic substance binding"/>
    <property type="evidence" value="ECO:0007669"/>
    <property type="project" value="InterPro"/>
</dbReference>
<dbReference type="GO" id="GO:0031342">
    <property type="term" value="P:negative regulation of cell killing"/>
    <property type="evidence" value="ECO:0007669"/>
    <property type="project" value="InterPro"/>
</dbReference>
<dbReference type="GO" id="GO:0009636">
    <property type="term" value="P:response to toxic substance"/>
    <property type="evidence" value="ECO:0007669"/>
    <property type="project" value="InterPro"/>
</dbReference>
<dbReference type="CDD" id="cd00093">
    <property type="entry name" value="HTH_XRE"/>
    <property type="match status" value="1"/>
</dbReference>
<dbReference type="Gene3D" id="1.10.8.130">
    <property type="match status" value="1"/>
</dbReference>
<dbReference type="Gene3D" id="1.10.260.40">
    <property type="entry name" value="lambda repressor-like DNA-binding domains"/>
    <property type="match status" value="1"/>
</dbReference>
<dbReference type="InterPro" id="IPR035569">
    <property type="entry name" value="Antitoxin_epsilon/PezA_dom_sf"/>
</dbReference>
<dbReference type="InterPro" id="IPR001387">
    <property type="entry name" value="Cro/C1-type_HTH"/>
</dbReference>
<dbReference type="InterPro" id="IPR015090">
    <property type="entry name" value="Epsilon_PezA_dom"/>
</dbReference>
<dbReference type="InterPro" id="IPR010982">
    <property type="entry name" value="Lambda_DNA-bd_dom_sf"/>
</dbReference>
<dbReference type="InterPro" id="IPR048181">
    <property type="entry name" value="PezA"/>
</dbReference>
<dbReference type="NCBIfam" id="NF041575">
    <property type="entry name" value="antitoxPezA_Strep"/>
    <property type="match status" value="1"/>
</dbReference>
<dbReference type="PANTHER" id="PTHR46558:SF11">
    <property type="entry name" value="HTH-TYPE TRANSCRIPTIONAL REGULATOR XRE"/>
    <property type="match status" value="1"/>
</dbReference>
<dbReference type="PANTHER" id="PTHR46558">
    <property type="entry name" value="TRACRIPTIONAL REGULATORY PROTEIN-RELATED-RELATED"/>
    <property type="match status" value="1"/>
</dbReference>
<dbReference type="Pfam" id="PF08998">
    <property type="entry name" value="Epsilon_antitox"/>
    <property type="match status" value="1"/>
</dbReference>
<dbReference type="Pfam" id="PF01381">
    <property type="entry name" value="HTH_3"/>
    <property type="match status" value="1"/>
</dbReference>
<dbReference type="SMART" id="SM00530">
    <property type="entry name" value="HTH_XRE"/>
    <property type="match status" value="1"/>
</dbReference>
<dbReference type="SUPFAM" id="SSF47413">
    <property type="entry name" value="lambda repressor-like DNA-binding domains"/>
    <property type="match status" value="1"/>
</dbReference>
<dbReference type="PROSITE" id="PS50943">
    <property type="entry name" value="HTH_CROC1"/>
    <property type="match status" value="1"/>
</dbReference>
<comment type="function">
    <text evidence="2 4">Antitoxin component of a type II toxin-antitoxin (TA) system. Upon expression in E.coli neutralizes the toxic effect of cognate toxin PezT. Represses transcription of its own operon, PezT acts as a corepressor, considerably increasing repression.</text>
</comment>
<comment type="subunit">
    <text evidence="2 3">Probably a homodimer, forms a PezA(2)PezT(2) heterotetramer. The heterotetramer is much more stable than either of the proteins alone, and a specific mechanism may be necessary to liberate the toxin.</text>
</comment>
<comment type="induction">
    <text>Conflicting data is available; found to be a member of the pezAT operon (upon ectopic expression in E.coli); in S.pneumoniae strain 0100993 is found in a monocistronic operon.</text>
</comment>